<protein>
    <recommendedName>
        <fullName evidence="4">Adipose-secreted signaling protein</fullName>
    </recommendedName>
</protein>
<accession>Q9GZN8</accession>
<accession>A8K4J0</accession>
<accession>D3DVX8</accession>
<accession>Q5JX81</accession>
<accession>Q9NWX3</accession>
<reference key="1">
    <citation type="journal article" date="2004" name="Nat. Genet.">
        <title>Complete sequencing and characterization of 21,243 full-length human cDNAs.</title>
        <authorList>
            <person name="Ota T."/>
            <person name="Suzuki Y."/>
            <person name="Nishikawa T."/>
            <person name="Otsuki T."/>
            <person name="Sugiyama T."/>
            <person name="Irie R."/>
            <person name="Wakamatsu A."/>
            <person name="Hayashi K."/>
            <person name="Sato H."/>
            <person name="Nagai K."/>
            <person name="Kimura K."/>
            <person name="Makita H."/>
            <person name="Sekine M."/>
            <person name="Obayashi M."/>
            <person name="Nishi T."/>
            <person name="Shibahara T."/>
            <person name="Tanaka T."/>
            <person name="Ishii S."/>
            <person name="Yamamoto J."/>
            <person name="Saito K."/>
            <person name="Kawai Y."/>
            <person name="Isono Y."/>
            <person name="Nakamura Y."/>
            <person name="Nagahari K."/>
            <person name="Murakami K."/>
            <person name="Yasuda T."/>
            <person name="Iwayanagi T."/>
            <person name="Wagatsuma M."/>
            <person name="Shiratori A."/>
            <person name="Sudo H."/>
            <person name="Hosoiri T."/>
            <person name="Kaku Y."/>
            <person name="Kodaira H."/>
            <person name="Kondo H."/>
            <person name="Sugawara M."/>
            <person name="Takahashi M."/>
            <person name="Kanda K."/>
            <person name="Yokoi T."/>
            <person name="Furuya T."/>
            <person name="Kikkawa E."/>
            <person name="Omura Y."/>
            <person name="Abe K."/>
            <person name="Kamihara K."/>
            <person name="Katsuta N."/>
            <person name="Sato K."/>
            <person name="Tanikawa M."/>
            <person name="Yamazaki M."/>
            <person name="Ninomiya K."/>
            <person name="Ishibashi T."/>
            <person name="Yamashita H."/>
            <person name="Murakawa K."/>
            <person name="Fujimori K."/>
            <person name="Tanai H."/>
            <person name="Kimata M."/>
            <person name="Watanabe M."/>
            <person name="Hiraoka S."/>
            <person name="Chiba Y."/>
            <person name="Ishida S."/>
            <person name="Ono Y."/>
            <person name="Takiguchi S."/>
            <person name="Watanabe S."/>
            <person name="Yosida M."/>
            <person name="Hotuta T."/>
            <person name="Kusano J."/>
            <person name="Kanehori K."/>
            <person name="Takahashi-Fujii A."/>
            <person name="Hara H."/>
            <person name="Tanase T.-O."/>
            <person name="Nomura Y."/>
            <person name="Togiya S."/>
            <person name="Komai F."/>
            <person name="Hara R."/>
            <person name="Takeuchi K."/>
            <person name="Arita M."/>
            <person name="Imose N."/>
            <person name="Musashino K."/>
            <person name="Yuuki H."/>
            <person name="Oshima A."/>
            <person name="Sasaki N."/>
            <person name="Aotsuka S."/>
            <person name="Yoshikawa Y."/>
            <person name="Matsunawa H."/>
            <person name="Ichihara T."/>
            <person name="Shiohata N."/>
            <person name="Sano S."/>
            <person name="Moriya S."/>
            <person name="Momiyama H."/>
            <person name="Satoh N."/>
            <person name="Takami S."/>
            <person name="Terashima Y."/>
            <person name="Suzuki O."/>
            <person name="Nakagawa S."/>
            <person name="Senoh A."/>
            <person name="Mizoguchi H."/>
            <person name="Goto Y."/>
            <person name="Shimizu F."/>
            <person name="Wakebe H."/>
            <person name="Hishigaki H."/>
            <person name="Watanabe T."/>
            <person name="Sugiyama A."/>
            <person name="Takemoto M."/>
            <person name="Kawakami B."/>
            <person name="Yamazaki M."/>
            <person name="Watanabe K."/>
            <person name="Kumagai A."/>
            <person name="Itakura S."/>
            <person name="Fukuzumi Y."/>
            <person name="Fujimori Y."/>
            <person name="Komiyama M."/>
            <person name="Tashiro H."/>
            <person name="Tanigami A."/>
            <person name="Fujiwara T."/>
            <person name="Ono T."/>
            <person name="Yamada K."/>
            <person name="Fujii Y."/>
            <person name="Ozaki K."/>
            <person name="Hirao M."/>
            <person name="Ohmori Y."/>
            <person name="Kawabata A."/>
            <person name="Hikiji T."/>
            <person name="Kobatake N."/>
            <person name="Inagaki H."/>
            <person name="Ikema Y."/>
            <person name="Okamoto S."/>
            <person name="Okitani R."/>
            <person name="Kawakami T."/>
            <person name="Noguchi S."/>
            <person name="Itoh T."/>
            <person name="Shigeta K."/>
            <person name="Senba T."/>
            <person name="Matsumura K."/>
            <person name="Nakajima Y."/>
            <person name="Mizuno T."/>
            <person name="Morinaga M."/>
            <person name="Sasaki M."/>
            <person name="Togashi T."/>
            <person name="Oyama M."/>
            <person name="Hata H."/>
            <person name="Watanabe M."/>
            <person name="Komatsu T."/>
            <person name="Mizushima-Sugano J."/>
            <person name="Satoh T."/>
            <person name="Shirai Y."/>
            <person name="Takahashi Y."/>
            <person name="Nakagawa K."/>
            <person name="Okumura K."/>
            <person name="Nagase T."/>
            <person name="Nomura N."/>
            <person name="Kikuchi H."/>
            <person name="Masuho Y."/>
            <person name="Yamashita R."/>
            <person name="Nakai K."/>
            <person name="Yada T."/>
            <person name="Nakamura Y."/>
            <person name="Ohara O."/>
            <person name="Isogai T."/>
            <person name="Sugano S."/>
        </authorList>
    </citation>
    <scope>NUCLEOTIDE SEQUENCE [LARGE SCALE MRNA] (ISOFORM 1)</scope>
    <source>
        <tissue>Gastric carcinoma</tissue>
        <tissue>Teratocarcinoma</tissue>
        <tissue>Testis</tissue>
    </source>
</reference>
<reference key="2">
    <citation type="submission" date="2004-07" db="EMBL/GenBank/DDBJ databases">
        <title>Full-length cDNA libraries and normalization.</title>
        <authorList>
            <person name="Li W.B."/>
            <person name="Gruber C."/>
            <person name="Jessee J."/>
            <person name="Polayes D."/>
        </authorList>
    </citation>
    <scope>NUCLEOTIDE SEQUENCE [LARGE SCALE MRNA] (ISOFORM 2)</scope>
</reference>
<reference key="3">
    <citation type="journal article" date="2001" name="Nature">
        <title>The DNA sequence and comparative analysis of human chromosome 20.</title>
        <authorList>
            <person name="Deloukas P."/>
            <person name="Matthews L.H."/>
            <person name="Ashurst J.L."/>
            <person name="Burton J."/>
            <person name="Gilbert J.G.R."/>
            <person name="Jones M."/>
            <person name="Stavrides G."/>
            <person name="Almeida J.P."/>
            <person name="Babbage A.K."/>
            <person name="Bagguley C.L."/>
            <person name="Bailey J."/>
            <person name="Barlow K.F."/>
            <person name="Bates K.N."/>
            <person name="Beard L.M."/>
            <person name="Beare D.M."/>
            <person name="Beasley O.P."/>
            <person name="Bird C.P."/>
            <person name="Blakey S.E."/>
            <person name="Bridgeman A.M."/>
            <person name="Brown A.J."/>
            <person name="Buck D."/>
            <person name="Burrill W.D."/>
            <person name="Butler A.P."/>
            <person name="Carder C."/>
            <person name="Carter N.P."/>
            <person name="Chapman J.C."/>
            <person name="Clamp M."/>
            <person name="Clark G."/>
            <person name="Clark L.N."/>
            <person name="Clark S.Y."/>
            <person name="Clee C.M."/>
            <person name="Clegg S."/>
            <person name="Cobley V.E."/>
            <person name="Collier R.E."/>
            <person name="Connor R.E."/>
            <person name="Corby N.R."/>
            <person name="Coulson A."/>
            <person name="Coville G.J."/>
            <person name="Deadman R."/>
            <person name="Dhami P.D."/>
            <person name="Dunn M."/>
            <person name="Ellington A.G."/>
            <person name="Frankland J.A."/>
            <person name="Fraser A."/>
            <person name="French L."/>
            <person name="Garner P."/>
            <person name="Grafham D.V."/>
            <person name="Griffiths C."/>
            <person name="Griffiths M.N.D."/>
            <person name="Gwilliam R."/>
            <person name="Hall R.E."/>
            <person name="Hammond S."/>
            <person name="Harley J.L."/>
            <person name="Heath P.D."/>
            <person name="Ho S."/>
            <person name="Holden J.L."/>
            <person name="Howden P.J."/>
            <person name="Huckle E."/>
            <person name="Hunt A.R."/>
            <person name="Hunt S.E."/>
            <person name="Jekosch K."/>
            <person name="Johnson C.M."/>
            <person name="Johnson D."/>
            <person name="Kay M.P."/>
            <person name="Kimberley A.M."/>
            <person name="King A."/>
            <person name="Knights A."/>
            <person name="Laird G.K."/>
            <person name="Lawlor S."/>
            <person name="Lehvaeslaiho M.H."/>
            <person name="Leversha M.A."/>
            <person name="Lloyd C."/>
            <person name="Lloyd D.M."/>
            <person name="Lovell J.D."/>
            <person name="Marsh V.L."/>
            <person name="Martin S.L."/>
            <person name="McConnachie L.J."/>
            <person name="McLay K."/>
            <person name="McMurray A.A."/>
            <person name="Milne S.A."/>
            <person name="Mistry D."/>
            <person name="Moore M.J.F."/>
            <person name="Mullikin J.C."/>
            <person name="Nickerson T."/>
            <person name="Oliver K."/>
            <person name="Parker A."/>
            <person name="Patel R."/>
            <person name="Pearce T.A.V."/>
            <person name="Peck A.I."/>
            <person name="Phillimore B.J.C.T."/>
            <person name="Prathalingam S.R."/>
            <person name="Plumb R.W."/>
            <person name="Ramsay H."/>
            <person name="Rice C.M."/>
            <person name="Ross M.T."/>
            <person name="Scott C.E."/>
            <person name="Sehra H.K."/>
            <person name="Shownkeen R."/>
            <person name="Sims S."/>
            <person name="Skuce C.D."/>
            <person name="Smith M.L."/>
            <person name="Soderlund C."/>
            <person name="Steward C.A."/>
            <person name="Sulston J.E."/>
            <person name="Swann R.M."/>
            <person name="Sycamore N."/>
            <person name="Taylor R."/>
            <person name="Tee L."/>
            <person name="Thomas D.W."/>
            <person name="Thorpe A."/>
            <person name="Tracey A."/>
            <person name="Tromans A.C."/>
            <person name="Vaudin M."/>
            <person name="Wall M."/>
            <person name="Wallis J.M."/>
            <person name="Whitehead S.L."/>
            <person name="Whittaker P."/>
            <person name="Willey D.L."/>
            <person name="Williams L."/>
            <person name="Williams S.A."/>
            <person name="Wilming L."/>
            <person name="Wray P.W."/>
            <person name="Hubbard T."/>
            <person name="Durbin R.M."/>
            <person name="Bentley D.R."/>
            <person name="Beck S."/>
            <person name="Rogers J."/>
        </authorList>
    </citation>
    <scope>NUCLEOTIDE SEQUENCE [LARGE SCALE GENOMIC DNA]</scope>
</reference>
<reference key="4">
    <citation type="submission" date="2005-09" db="EMBL/GenBank/DDBJ databases">
        <authorList>
            <person name="Mural R.J."/>
            <person name="Istrail S."/>
            <person name="Sutton G.G."/>
            <person name="Florea L."/>
            <person name="Halpern A.L."/>
            <person name="Mobarry C.M."/>
            <person name="Lippert R."/>
            <person name="Walenz B."/>
            <person name="Shatkay H."/>
            <person name="Dew I."/>
            <person name="Miller J.R."/>
            <person name="Flanigan M.J."/>
            <person name="Edwards N.J."/>
            <person name="Bolanos R."/>
            <person name="Fasulo D."/>
            <person name="Halldorsson B.V."/>
            <person name="Hannenhalli S."/>
            <person name="Turner R."/>
            <person name="Yooseph S."/>
            <person name="Lu F."/>
            <person name="Nusskern D.R."/>
            <person name="Shue B.C."/>
            <person name="Zheng X.H."/>
            <person name="Zhong F."/>
            <person name="Delcher A.L."/>
            <person name="Huson D.H."/>
            <person name="Kravitz S.A."/>
            <person name="Mouchard L."/>
            <person name="Reinert K."/>
            <person name="Remington K.A."/>
            <person name="Clark A.G."/>
            <person name="Waterman M.S."/>
            <person name="Eichler E.E."/>
            <person name="Adams M.D."/>
            <person name="Hunkapiller M.W."/>
            <person name="Myers E.W."/>
            <person name="Venter J.C."/>
        </authorList>
    </citation>
    <scope>NUCLEOTIDE SEQUENCE [LARGE SCALE GENOMIC DNA]</scope>
</reference>
<reference key="5">
    <citation type="journal article" date="2004" name="Genome Res.">
        <title>The status, quality, and expansion of the NIH full-length cDNA project: the Mammalian Gene Collection (MGC).</title>
        <authorList>
            <consortium name="The MGC Project Team"/>
        </authorList>
    </citation>
    <scope>NUCLEOTIDE SEQUENCE [LARGE SCALE MRNA] (ISOFORM 1)</scope>
    <source>
        <tissue>Brain</tissue>
        <tissue>Lung</tissue>
    </source>
</reference>
<reference key="6">
    <citation type="journal article" date="2003" name="Nat. Biotechnol.">
        <title>Exploring proteomes and analyzing protein processing by mass spectrometric identification of sorted N-terminal peptides.</title>
        <authorList>
            <person name="Gevaert K."/>
            <person name="Goethals M."/>
            <person name="Martens L."/>
            <person name="Van Damme J."/>
            <person name="Staes A."/>
            <person name="Thomas G.R."/>
            <person name="Vandekerckhove J."/>
        </authorList>
    </citation>
    <scope>PROTEIN SEQUENCE OF 2-11 (ISOFORM 1)</scope>
    <source>
        <tissue>Platelet</tissue>
    </source>
</reference>
<reference key="7">
    <citation type="journal article" date="2008" name="Proc. Natl. Acad. Sci. U.S.A.">
        <title>A quantitative atlas of mitotic phosphorylation.</title>
        <authorList>
            <person name="Dephoure N."/>
            <person name="Zhou C."/>
            <person name="Villen J."/>
            <person name="Beausoleil S.A."/>
            <person name="Bakalarski C.E."/>
            <person name="Elledge S.J."/>
            <person name="Gygi S.P."/>
        </authorList>
    </citation>
    <scope>IDENTIFICATION BY MASS SPECTROMETRY [LARGE SCALE ANALYSIS]</scope>
    <source>
        <tissue>Cervix carcinoma</tissue>
    </source>
</reference>
<reference key="8">
    <citation type="journal article" date="2011" name="BMC Syst. Biol.">
        <title>Initial characterization of the human central proteome.</title>
        <authorList>
            <person name="Burkard T.R."/>
            <person name="Planyavsky M."/>
            <person name="Kaupe I."/>
            <person name="Breitwieser F.P."/>
            <person name="Buerckstuemmer T."/>
            <person name="Bennett K.L."/>
            <person name="Superti-Furga G."/>
            <person name="Colinge J."/>
        </authorList>
    </citation>
    <scope>IDENTIFICATION BY MASS SPECTROMETRY [LARGE SCALE ANALYSIS]</scope>
</reference>
<reference key="9">
    <citation type="journal article" date="2012" name="Proc. Natl. Acad. Sci. U.S.A.">
        <title>N-terminal acetylome analyses and functional insights of the N-terminal acetyltransferase NatB.</title>
        <authorList>
            <person name="Van Damme P."/>
            <person name="Lasa M."/>
            <person name="Polevoda B."/>
            <person name="Gazquez C."/>
            <person name="Elosegui-Artola A."/>
            <person name="Kim D.S."/>
            <person name="De Juan-Pardo E."/>
            <person name="Demeyer K."/>
            <person name="Hole K."/>
            <person name="Larrea E."/>
            <person name="Timmerman E."/>
            <person name="Prieto J."/>
            <person name="Arnesen T."/>
            <person name="Sherman F."/>
            <person name="Gevaert K."/>
            <person name="Aldabe R."/>
        </authorList>
    </citation>
    <scope>ACETYLATION [LARGE SCALE ANALYSIS] AT ALA-2</scope>
    <scope>CLEAVAGE OF INITIATOR METHIONINE [LARGE SCALE ANALYSIS]</scope>
    <scope>IDENTIFICATION BY MASS SPECTROMETRY [LARGE SCALE ANALYSIS]</scope>
</reference>
<sequence>MAAANKGNKPRVRSIRFAAGHDAEGSHSHVHFDEKLHDSVVMVTQESDSSFLVKVGFLKILHRYEITFTLPPVHRLSKDVREAPVPSLHLKLLSVVPVPEGYSVKCEYSAHKEGVLKEEILLACEGGTGTCVRVTVQARVMDRHHGTPMLLDGVKCVGAELEYDSEHSDWHGFD</sequence>
<name>ADSSP_HUMAN</name>
<organism>
    <name type="scientific">Homo sapiens</name>
    <name type="common">Human</name>
    <dbReference type="NCBI Taxonomy" id="9606"/>
    <lineage>
        <taxon>Eukaryota</taxon>
        <taxon>Metazoa</taxon>
        <taxon>Chordata</taxon>
        <taxon>Craniata</taxon>
        <taxon>Vertebrata</taxon>
        <taxon>Euteleostomi</taxon>
        <taxon>Mammalia</taxon>
        <taxon>Eutheria</taxon>
        <taxon>Euarchontoglires</taxon>
        <taxon>Primates</taxon>
        <taxon>Haplorrhini</taxon>
        <taxon>Catarrhini</taxon>
        <taxon>Hominidae</taxon>
        <taxon>Homo</taxon>
    </lineage>
</organism>
<feature type="initiator methionine" description="Removed" evidence="5">
    <location>
        <position position="1"/>
    </location>
</feature>
<feature type="chain" id="PRO_0000079419" description="Adipose-secreted signaling protein">
    <location>
        <begin position="2"/>
        <end position="174"/>
    </location>
</feature>
<feature type="modified residue" description="N-acetylalanine" evidence="5">
    <location>
        <position position="2"/>
    </location>
</feature>
<feature type="modified residue" description="Phosphothreonine" evidence="1">
    <location>
        <position position="147"/>
    </location>
</feature>
<feature type="splice variant" id="VSP_040293" description="In isoform 2." evidence="2">
    <original>K</original>
    <variation>KGKCLPGVVGLAQALPVGPGRRAIAA</variation>
    <location>
        <position position="6"/>
    </location>
</feature>
<feature type="sequence conflict" description="In Ref. 1; BAA91252." evidence="3" ref="1">
    <original>S</original>
    <variation>G</variation>
    <location>
        <position position="14"/>
    </location>
</feature>
<comment type="function">
    <text evidence="1">Adipocyte-secreted protein (adipokine) that acts as a key regulator for white adipose tissue (WAT) thermogenesis and glucose homeostasis at least in part through activation of protein kinase A (PKA).</text>
</comment>
<comment type="subcellular location">
    <subcellularLocation>
        <location evidence="1">Secreted</location>
    </subcellularLocation>
</comment>
<comment type="alternative products">
    <event type="alternative splicing"/>
    <isoform>
        <id>Q9GZN8-1</id>
        <name>1</name>
        <sequence type="displayed"/>
    </isoform>
    <isoform>
        <id>Q9GZN8-2</id>
        <name>2</name>
        <sequence type="described" ref="VSP_040293"/>
    </isoform>
</comment>
<comment type="similarity">
    <text evidence="3">Belongs to the ADISSP family.</text>
</comment>
<evidence type="ECO:0000250" key="1">
    <source>
        <dbReference type="UniProtKB" id="Q9D1K7"/>
    </source>
</evidence>
<evidence type="ECO:0000303" key="2">
    <source ref="2"/>
</evidence>
<evidence type="ECO:0000305" key="3"/>
<evidence type="ECO:0000312" key="4">
    <source>
        <dbReference type="HGNC" id="HGNC:15873"/>
    </source>
</evidence>
<evidence type="ECO:0007744" key="5">
    <source>
    </source>
</evidence>
<dbReference type="EMBL" id="AK000557">
    <property type="protein sequence ID" value="BAA91252.1"/>
    <property type="molecule type" value="mRNA"/>
</dbReference>
<dbReference type="EMBL" id="AK024220">
    <property type="protein sequence ID" value="BAB14854.1"/>
    <property type="molecule type" value="mRNA"/>
</dbReference>
<dbReference type="EMBL" id="AK097645">
    <property type="protein sequence ID" value="BAG53501.1"/>
    <property type="molecule type" value="mRNA"/>
</dbReference>
<dbReference type="EMBL" id="AK290955">
    <property type="protein sequence ID" value="BAF83644.1"/>
    <property type="molecule type" value="mRNA"/>
</dbReference>
<dbReference type="EMBL" id="CR615129">
    <property type="status" value="NOT_ANNOTATED_CDS"/>
    <property type="molecule type" value="mRNA"/>
</dbReference>
<dbReference type="EMBL" id="AL109804">
    <property type="status" value="NOT_ANNOTATED_CDS"/>
    <property type="molecule type" value="Genomic_DNA"/>
</dbReference>
<dbReference type="EMBL" id="CH471133">
    <property type="protein sequence ID" value="EAX10508.1"/>
    <property type="molecule type" value="Genomic_DNA"/>
</dbReference>
<dbReference type="EMBL" id="CH471133">
    <property type="protein sequence ID" value="EAX10510.1"/>
    <property type="molecule type" value="Genomic_DNA"/>
</dbReference>
<dbReference type="EMBL" id="CH471133">
    <property type="protein sequence ID" value="EAX10511.1"/>
    <property type="molecule type" value="Genomic_DNA"/>
</dbReference>
<dbReference type="EMBL" id="BC012196">
    <property type="protein sequence ID" value="AAH12196.1"/>
    <property type="molecule type" value="mRNA"/>
</dbReference>
<dbReference type="EMBL" id="BC024036">
    <property type="protein sequence ID" value="AAH24036.1"/>
    <property type="molecule type" value="mRNA"/>
</dbReference>
<dbReference type="CCDS" id="CCDS33436.1">
    <molecule id="Q9GZN8-2"/>
</dbReference>
<dbReference type="CCDS" id="CCDS58763.1">
    <molecule id="Q9GZN8-1"/>
</dbReference>
<dbReference type="RefSeq" id="NP_001034229.1">
    <molecule id="Q9GZN8-2"/>
    <property type="nucleotide sequence ID" value="NM_001039140.3"/>
</dbReference>
<dbReference type="RefSeq" id="NP_001245358.1">
    <molecule id="Q9GZN8-1"/>
    <property type="nucleotide sequence ID" value="NM_001258429.2"/>
</dbReference>
<dbReference type="RefSeq" id="NP_001245359.1">
    <molecule id="Q9GZN8-1"/>
    <property type="nucleotide sequence ID" value="NM_001258430.2"/>
</dbReference>
<dbReference type="BioGRID" id="120312">
    <property type="interactions" value="50"/>
</dbReference>
<dbReference type="FunCoup" id="Q9GZN8">
    <property type="interactions" value="140"/>
</dbReference>
<dbReference type="IntAct" id="Q9GZN8">
    <property type="interactions" value="12"/>
</dbReference>
<dbReference type="MINT" id="Q9GZN8"/>
<dbReference type="STRING" id="9606.ENSP00000217195"/>
<dbReference type="GlyGen" id="Q9GZN8">
    <property type="glycosylation" value="1 site, 1 O-linked glycan (1 site)"/>
</dbReference>
<dbReference type="iPTMnet" id="Q9GZN8"/>
<dbReference type="PhosphoSitePlus" id="Q9GZN8"/>
<dbReference type="BioMuta" id="C20orf27"/>
<dbReference type="CPTAC" id="CPTAC-1603"/>
<dbReference type="jPOST" id="Q9GZN8"/>
<dbReference type="MassIVE" id="Q9GZN8"/>
<dbReference type="PaxDb" id="9606-ENSP00000217195"/>
<dbReference type="PeptideAtlas" id="Q9GZN8"/>
<dbReference type="ProteomicsDB" id="80100">
    <molecule id="Q9GZN8-1"/>
</dbReference>
<dbReference type="ProteomicsDB" id="80101">
    <molecule id="Q9GZN8-2"/>
</dbReference>
<dbReference type="Pumba" id="Q9GZN8"/>
<dbReference type="Antibodypedia" id="54581">
    <property type="antibodies" value="45 antibodies from 9 providers"/>
</dbReference>
<dbReference type="DNASU" id="54976"/>
<dbReference type="Ensembl" id="ENST00000217195.12">
    <molecule id="Q9GZN8-2"/>
    <property type="protein sequence ID" value="ENSP00000217195.8"/>
    <property type="gene ID" value="ENSG00000101220.18"/>
</dbReference>
<dbReference type="Ensembl" id="ENST00000379772.4">
    <molecule id="Q9GZN8-1"/>
    <property type="protein sequence ID" value="ENSP00000369097.4"/>
    <property type="gene ID" value="ENSG00000101220.18"/>
</dbReference>
<dbReference type="Ensembl" id="ENST00000399672.5">
    <molecule id="Q9GZN8-1"/>
    <property type="protein sequence ID" value="ENSP00000382580.1"/>
    <property type="gene ID" value="ENSG00000101220.18"/>
</dbReference>
<dbReference type="GeneID" id="54976"/>
<dbReference type="KEGG" id="hsa:54976"/>
<dbReference type="MANE-Select" id="ENST00000379772.4">
    <property type="protein sequence ID" value="ENSP00000369097.4"/>
    <property type="RefSeq nucleotide sequence ID" value="NM_001258429.2"/>
    <property type="RefSeq protein sequence ID" value="NP_001245358.1"/>
</dbReference>
<dbReference type="UCSC" id="uc002wjh.3">
    <molecule id="Q9GZN8-1"/>
    <property type="organism name" value="human"/>
</dbReference>
<dbReference type="AGR" id="HGNC:15873"/>
<dbReference type="CTD" id="54976"/>
<dbReference type="DisGeNET" id="54976"/>
<dbReference type="GeneCards" id="ADISSP"/>
<dbReference type="HGNC" id="HGNC:15873">
    <property type="gene designation" value="ADISSP"/>
</dbReference>
<dbReference type="HPA" id="ENSG00000101220">
    <property type="expression patterns" value="Tissue enhanced (brain)"/>
</dbReference>
<dbReference type="MIM" id="620373">
    <property type="type" value="gene"/>
</dbReference>
<dbReference type="neXtProt" id="NX_Q9GZN8"/>
<dbReference type="OpenTargets" id="ENSG00000101220"/>
<dbReference type="PharmGKB" id="PA25742"/>
<dbReference type="VEuPathDB" id="HostDB:ENSG00000101220"/>
<dbReference type="eggNOG" id="ENOG502RXJD">
    <property type="taxonomic scope" value="Eukaryota"/>
</dbReference>
<dbReference type="GeneTree" id="ENSGT00390000008711"/>
<dbReference type="InParanoid" id="Q9GZN8"/>
<dbReference type="OMA" id="GVRCIGM"/>
<dbReference type="OrthoDB" id="17136at9604"/>
<dbReference type="PAN-GO" id="Q9GZN8">
    <property type="GO annotations" value="0 GO annotations based on evolutionary models"/>
</dbReference>
<dbReference type="PhylomeDB" id="Q9GZN8"/>
<dbReference type="TreeFam" id="TF323780"/>
<dbReference type="PathwayCommons" id="Q9GZN8"/>
<dbReference type="SignaLink" id="Q9GZN8"/>
<dbReference type="BioGRID-ORCS" id="54976">
    <property type="hits" value="11 hits in 1148 CRISPR screens"/>
</dbReference>
<dbReference type="CD-CODE" id="DEE660B4">
    <property type="entry name" value="Stress granule"/>
</dbReference>
<dbReference type="ChiTaRS" id="C20orf27">
    <property type="organism name" value="human"/>
</dbReference>
<dbReference type="GeneWiki" id="C20orf27"/>
<dbReference type="GenomeRNAi" id="54976"/>
<dbReference type="Pharos" id="Q9GZN8">
    <property type="development level" value="Tdark"/>
</dbReference>
<dbReference type="PRO" id="PR:Q9GZN8"/>
<dbReference type="Proteomes" id="UP000005640">
    <property type="component" value="Chromosome 20"/>
</dbReference>
<dbReference type="RNAct" id="Q9GZN8">
    <property type="molecule type" value="protein"/>
</dbReference>
<dbReference type="Bgee" id="ENSG00000101220">
    <property type="expression patterns" value="Expressed in nucleus accumbens and 185 other cell types or tissues"/>
</dbReference>
<dbReference type="ExpressionAtlas" id="Q9GZN8">
    <property type="expression patterns" value="baseline and differential"/>
</dbReference>
<dbReference type="GO" id="GO:0005615">
    <property type="term" value="C:extracellular space"/>
    <property type="evidence" value="ECO:0000250"/>
    <property type="project" value="UniProtKB"/>
</dbReference>
<dbReference type="GO" id="GO:0008157">
    <property type="term" value="F:protein phosphatase 1 binding"/>
    <property type="evidence" value="ECO:0000314"/>
    <property type="project" value="FlyBase"/>
</dbReference>
<dbReference type="GO" id="GO:1990845">
    <property type="term" value="P:adaptive thermogenesis"/>
    <property type="evidence" value="ECO:0000250"/>
    <property type="project" value="UniProtKB"/>
</dbReference>
<dbReference type="GO" id="GO:0042593">
    <property type="term" value="P:glucose homeostasis"/>
    <property type="evidence" value="ECO:0000250"/>
    <property type="project" value="UniProtKB"/>
</dbReference>
<dbReference type="GO" id="GO:1901224">
    <property type="term" value="P:positive regulation of non-canonical NF-kappaB signal transduction"/>
    <property type="evidence" value="ECO:0000315"/>
    <property type="project" value="FlyBase"/>
</dbReference>
<dbReference type="GO" id="GO:0010739">
    <property type="term" value="P:positive regulation of protein kinase A signaling"/>
    <property type="evidence" value="ECO:0000250"/>
    <property type="project" value="UniProtKB"/>
</dbReference>
<dbReference type="GO" id="GO:0030511">
    <property type="term" value="P:positive regulation of transforming growth factor beta receptor signaling pathway"/>
    <property type="evidence" value="ECO:0000315"/>
    <property type="project" value="FlyBase"/>
</dbReference>
<dbReference type="InterPro" id="IPR026794">
    <property type="entry name" value="ADISSP"/>
</dbReference>
<dbReference type="PANTHER" id="PTHR13287">
    <property type="entry name" value="ADIPOSE-SECRETED SIGNALING PROTEIN"/>
    <property type="match status" value="1"/>
</dbReference>
<dbReference type="PANTHER" id="PTHR13287:SF2">
    <property type="entry name" value="ADIPOSE-SECRETED SIGNALING PROTEIN"/>
    <property type="match status" value="1"/>
</dbReference>
<dbReference type="Pfam" id="PF15006">
    <property type="entry name" value="DUF4517"/>
    <property type="match status" value="1"/>
</dbReference>
<gene>
    <name evidence="4" type="primary">ADISSP</name>
    <name evidence="4" type="synonym">C20orf27</name>
</gene>
<proteinExistence type="evidence at protein level"/>
<keyword id="KW-0007">Acetylation</keyword>
<keyword id="KW-0025">Alternative splicing</keyword>
<keyword id="KW-0903">Direct protein sequencing</keyword>
<keyword id="KW-0597">Phosphoprotein</keyword>
<keyword id="KW-1267">Proteomics identification</keyword>
<keyword id="KW-1185">Reference proteome</keyword>
<keyword id="KW-0964">Secreted</keyword>